<evidence type="ECO:0000255" key="1">
    <source>
        <dbReference type="PROSITE-ProRule" id="PRU00448"/>
    </source>
</evidence>
<evidence type="ECO:0000269" key="2">
    <source>
    </source>
</evidence>
<evidence type="ECO:0000269" key="3">
    <source>
    </source>
</evidence>
<evidence type="ECO:0000305" key="4"/>
<feature type="chain" id="PRO_0000073656" description="Calcium-binding protein CML24">
    <location>
        <begin position="1"/>
        <end position="161"/>
    </location>
</feature>
<feature type="domain" description="EF-hand 1" evidence="1">
    <location>
        <begin position="13"/>
        <end position="48"/>
    </location>
</feature>
<feature type="domain" description="EF-hand 2" evidence="1">
    <location>
        <begin position="49"/>
        <end position="84"/>
    </location>
</feature>
<feature type="domain" description="EF-hand 3" evidence="1">
    <location>
        <begin position="90"/>
        <end position="125"/>
    </location>
</feature>
<feature type="domain" description="EF-hand 4" evidence="1">
    <location>
        <begin position="126"/>
        <end position="161"/>
    </location>
</feature>
<feature type="binding site" evidence="1">
    <location>
        <position position="26"/>
    </location>
    <ligand>
        <name>Ca(2+)</name>
        <dbReference type="ChEBI" id="CHEBI:29108"/>
        <label>1</label>
    </ligand>
</feature>
<feature type="binding site" evidence="1">
    <location>
        <position position="28"/>
    </location>
    <ligand>
        <name>Ca(2+)</name>
        <dbReference type="ChEBI" id="CHEBI:29108"/>
        <label>1</label>
    </ligand>
</feature>
<feature type="binding site" evidence="1">
    <location>
        <position position="30"/>
    </location>
    <ligand>
        <name>Ca(2+)</name>
        <dbReference type="ChEBI" id="CHEBI:29108"/>
        <label>1</label>
    </ligand>
</feature>
<feature type="binding site" evidence="1">
    <location>
        <position position="32"/>
    </location>
    <ligand>
        <name>Ca(2+)</name>
        <dbReference type="ChEBI" id="CHEBI:29108"/>
        <label>1</label>
    </ligand>
</feature>
<feature type="binding site" evidence="1">
    <location>
        <position position="37"/>
    </location>
    <ligand>
        <name>Ca(2+)</name>
        <dbReference type="ChEBI" id="CHEBI:29108"/>
        <label>1</label>
    </ligand>
</feature>
<feature type="binding site" evidence="1">
    <location>
        <position position="62"/>
    </location>
    <ligand>
        <name>Ca(2+)</name>
        <dbReference type="ChEBI" id="CHEBI:29108"/>
        <label>2</label>
    </ligand>
</feature>
<feature type="binding site" evidence="1">
    <location>
        <position position="64"/>
    </location>
    <ligand>
        <name>Ca(2+)</name>
        <dbReference type="ChEBI" id="CHEBI:29108"/>
        <label>2</label>
    </ligand>
</feature>
<feature type="binding site" evidence="1">
    <location>
        <position position="66"/>
    </location>
    <ligand>
        <name>Ca(2+)</name>
        <dbReference type="ChEBI" id="CHEBI:29108"/>
        <label>2</label>
    </ligand>
</feature>
<feature type="binding site" evidence="1">
    <location>
        <position position="73"/>
    </location>
    <ligand>
        <name>Ca(2+)</name>
        <dbReference type="ChEBI" id="CHEBI:29108"/>
        <label>2</label>
    </ligand>
</feature>
<feature type="binding site" evidence="1">
    <location>
        <position position="103"/>
    </location>
    <ligand>
        <name>Ca(2+)</name>
        <dbReference type="ChEBI" id="CHEBI:29108"/>
        <label>3</label>
    </ligand>
</feature>
<feature type="binding site" evidence="1">
    <location>
        <position position="105"/>
    </location>
    <ligand>
        <name>Ca(2+)</name>
        <dbReference type="ChEBI" id="CHEBI:29108"/>
        <label>3</label>
    </ligand>
</feature>
<feature type="binding site" evidence="1">
    <location>
        <position position="107"/>
    </location>
    <ligand>
        <name>Ca(2+)</name>
        <dbReference type="ChEBI" id="CHEBI:29108"/>
        <label>3</label>
    </ligand>
</feature>
<feature type="binding site" evidence="1">
    <location>
        <position position="109"/>
    </location>
    <ligand>
        <name>Ca(2+)</name>
        <dbReference type="ChEBI" id="CHEBI:29108"/>
        <label>3</label>
    </ligand>
</feature>
<feature type="binding site" evidence="1">
    <location>
        <position position="114"/>
    </location>
    <ligand>
        <name>Ca(2+)</name>
        <dbReference type="ChEBI" id="CHEBI:29108"/>
        <label>3</label>
    </ligand>
</feature>
<feature type="binding site" evidence="1">
    <location>
        <position position="139"/>
    </location>
    <ligand>
        <name>Ca(2+)</name>
        <dbReference type="ChEBI" id="CHEBI:29108"/>
        <label>4</label>
    </ligand>
</feature>
<feature type="binding site" evidence="1">
    <location>
        <position position="141"/>
    </location>
    <ligand>
        <name>Ca(2+)</name>
        <dbReference type="ChEBI" id="CHEBI:29108"/>
        <label>4</label>
    </ligand>
</feature>
<feature type="binding site" evidence="1">
    <location>
        <position position="143"/>
    </location>
    <ligand>
        <name>Ca(2+)</name>
        <dbReference type="ChEBI" id="CHEBI:29108"/>
        <label>4</label>
    </ligand>
</feature>
<feature type="binding site" evidence="1">
    <location>
        <position position="145"/>
    </location>
    <ligand>
        <name>Ca(2+)</name>
        <dbReference type="ChEBI" id="CHEBI:29108"/>
        <label>4</label>
    </ligand>
</feature>
<feature type="binding site" evidence="1">
    <location>
        <position position="150"/>
    </location>
    <ligand>
        <name>Ca(2+)</name>
        <dbReference type="ChEBI" id="CHEBI:29108"/>
        <label>4</label>
    </ligand>
</feature>
<feature type="sequence conflict" description="In Ref. 7; no nucleotide entry." evidence="4" ref="7">
    <original>T</original>
    <variation>Y</variation>
    <location>
        <position position="54"/>
    </location>
</feature>
<comment type="function">
    <text evidence="3">Calcium-binding protein that may positively regulate abscisic acid (ABA) inhibition of germination and seedling development. May be required for photoperiod-induced flowering and function in ion homeostasis.</text>
</comment>
<comment type="tissue specificity">
    <text evidence="3">Expressed in seed coat, seedling radical, cotyledons, hypocotyl, shoot apex and elongating root. Expressed in the vasculature of cotyledons, leaves and roots. Highly expressed in guard cells, trichomes and hydathodes. Expressed in inflorescence stem branch points, silique abscission zone, young and mature styles and stigmatic papillae, mature anthers and developing seed.</text>
</comment>
<comment type="induction">
    <text evidence="2 3">By rain-, wind-, and touch (thigmomorphogenesis), dark, heat and cold treatments, hydrogen peroxide, ABA and auxin.</text>
</comment>
<comment type="caution">
    <text evidence="4">Although assigned as a calmodulin family member by Ref.9, it only contains EF-hand domains.</text>
</comment>
<accession>P25070</accession>
<accession>O22592</accession>
<accession>Q1ECM5</accession>
<proteinExistence type="evidence at transcript level"/>
<name>CML24_ARATH</name>
<gene>
    <name type="primary">CML24</name>
    <name type="synonym">TCH2</name>
    <name type="ordered locus">At5g37770</name>
    <name type="ORF">K22F20.1</name>
</gene>
<keyword id="KW-0106">Calcium</keyword>
<keyword id="KW-0479">Metal-binding</keyword>
<keyword id="KW-1185">Reference proteome</keyword>
<keyword id="KW-0677">Repeat</keyword>
<sequence>MSSKNGVVRSCLGSMDDIKKVFQRFDKNGDGKISVDELKEVIRALSPTASPEETVTMMKQFDLDGNGFIDLDEFVALFQIGIGGGGNNRNDVSDLKEAFELYDLDGNGRISAKELHSVMKNLGEKCSVQDCKKMISKVDIDGDGCVNFDEFKKMMSNGGGA</sequence>
<reference key="1">
    <citation type="submission" date="1997-11" db="EMBL/GenBank/DDBJ databases">
        <title>Regulation and characterization of the calmodulin-related TCH2 gene of Arabidopsis thaliana.</title>
        <authorList>
            <person name="Johnson K.A."/>
            <person name="Braam J."/>
        </authorList>
    </citation>
    <scope>NUCLEOTIDE SEQUENCE [GENOMIC DNA]</scope>
    <source>
        <strain>cv. Columbia</strain>
    </source>
</reference>
<reference key="2">
    <citation type="journal article" date="1998" name="DNA Res.">
        <title>Structural analysis of Arabidopsis thaliana chromosome 5. VII. Sequence features of the regions of 1,013,767 bp covered by sixteen physically assigned P1 and TAC clones.</title>
        <authorList>
            <person name="Nakamura Y."/>
            <person name="Sato S."/>
            <person name="Asamizu E."/>
            <person name="Kaneko T."/>
            <person name="Kotani H."/>
            <person name="Miyajima N."/>
            <person name="Tabata S."/>
        </authorList>
    </citation>
    <scope>NUCLEOTIDE SEQUENCE [LARGE SCALE GENOMIC DNA]</scope>
    <source>
        <strain>cv. Columbia</strain>
    </source>
</reference>
<reference key="3">
    <citation type="journal article" date="2017" name="Plant J.">
        <title>Araport11: a complete reannotation of the Arabidopsis thaliana reference genome.</title>
        <authorList>
            <person name="Cheng C.Y."/>
            <person name="Krishnakumar V."/>
            <person name="Chan A.P."/>
            <person name="Thibaud-Nissen F."/>
            <person name="Schobel S."/>
            <person name="Town C.D."/>
        </authorList>
    </citation>
    <scope>GENOME REANNOTATION</scope>
    <source>
        <strain>cv. Columbia</strain>
    </source>
</reference>
<reference key="4">
    <citation type="submission" date="2006-06" db="EMBL/GenBank/DDBJ databases">
        <title>Arabidopsis ORF clones.</title>
        <authorList>
            <person name="Quinitio C."/>
            <person name="Chen H."/>
            <person name="Kim C.J."/>
            <person name="Shinn P."/>
            <person name="Ecker J.R."/>
        </authorList>
    </citation>
    <scope>NUCLEOTIDE SEQUENCE [LARGE SCALE MRNA]</scope>
    <source>
        <strain>cv. Columbia</strain>
    </source>
</reference>
<reference key="5">
    <citation type="submission" date="2006-07" db="EMBL/GenBank/DDBJ databases">
        <title>Large-scale analysis of RIKEN Arabidopsis full-length (RAFL) cDNAs.</title>
        <authorList>
            <person name="Totoki Y."/>
            <person name="Seki M."/>
            <person name="Ishida J."/>
            <person name="Nakajima M."/>
            <person name="Enju A."/>
            <person name="Kamiya A."/>
            <person name="Narusaka M."/>
            <person name="Shin-i T."/>
            <person name="Nakagawa M."/>
            <person name="Sakamoto N."/>
            <person name="Oishi K."/>
            <person name="Kohara Y."/>
            <person name="Kobayashi M."/>
            <person name="Toyoda A."/>
            <person name="Sakaki Y."/>
            <person name="Sakurai T."/>
            <person name="Iida K."/>
            <person name="Akiyama K."/>
            <person name="Satou M."/>
            <person name="Toyoda T."/>
            <person name="Konagaya A."/>
            <person name="Carninci P."/>
            <person name="Kawai J."/>
            <person name="Hayashizaki Y."/>
            <person name="Shinozaki K."/>
        </authorList>
    </citation>
    <scope>NUCLEOTIDE SEQUENCE [LARGE SCALE MRNA]</scope>
    <source>
        <strain>cv. Columbia</strain>
    </source>
</reference>
<reference key="6">
    <citation type="submission" date="2002-03" db="EMBL/GenBank/DDBJ databases">
        <title>Full-length cDNA from Arabidopsis thaliana.</title>
        <authorList>
            <person name="Brover V.V."/>
            <person name="Troukhan M.E."/>
            <person name="Alexandrov N.A."/>
            <person name="Lu Y.-P."/>
            <person name="Flavell R.B."/>
            <person name="Feldmann K.A."/>
        </authorList>
    </citation>
    <scope>NUCLEOTIDE SEQUENCE [LARGE SCALE MRNA]</scope>
</reference>
<reference key="7">
    <citation type="journal article" date="1990" name="Cell">
        <title>Rain-, wind-, and touch-induced expression of calmodulin and calmodulin-related genes in Arabidopsis.</title>
        <authorList>
            <person name="Braam J."/>
            <person name="Davis R.W."/>
        </authorList>
    </citation>
    <scope>NUCLEOTIDE SEQUENCE [MRNA] OF 26-70</scope>
    <source>
        <strain>cv. Columbia</strain>
    </source>
</reference>
<reference key="8">
    <citation type="journal article" date="2005" name="Plant Physiol.">
        <title>CML24, regulated in expression by diverse stimuli, encodes a potential Ca2+ sensor that functions in responses to abscisic acid, daylength, and ion stress.</title>
        <authorList>
            <person name="Delk N.A."/>
            <person name="Johnson K.A."/>
            <person name="Chowdhury N.I."/>
            <person name="Braam J."/>
        </authorList>
    </citation>
    <scope>FUNCTION</scope>
    <scope>TISSUE SPECIFICITY</scope>
    <scope>INDUCTION</scope>
</reference>
<reference key="9">
    <citation type="journal article" date="2003" name="New Phytol.">
        <title>Calmodulins and related potential calcium sensors of Arabidopsis.</title>
        <authorList>
            <person name="McCormack E."/>
            <person name="Braam J."/>
        </authorList>
    </citation>
    <scope>GENE FAMILY</scope>
    <scope>NOMENCLATURE</scope>
</reference>
<reference key="10">
    <citation type="journal article" date="2005" name="New Phytol.">
        <title>Genome-wide identification of touch- and darkness-regulated Arabidopsis genes: a focus on calmodulin-like and XTH genes.</title>
        <authorList>
            <person name="Lee D."/>
            <person name="Polisensky D.H."/>
            <person name="Braam J."/>
        </authorList>
    </citation>
    <scope>INDUCTION</scope>
</reference>
<reference key="11">
    <citation type="journal article" date="1997" name="Proteins">
        <title>Comparative modeling of the three-dimensional structure of the calmodulin-related TCH2 protein from Arabidopsis.</title>
        <authorList>
            <person name="Khan A.R."/>
            <person name="Johnson K.A."/>
            <person name="Braam J."/>
            <person name="James M.N.G."/>
        </authorList>
    </citation>
    <scope>3D-STRUCTURE MODELING OF 7-158</scope>
</reference>
<organism>
    <name type="scientific">Arabidopsis thaliana</name>
    <name type="common">Mouse-ear cress</name>
    <dbReference type="NCBI Taxonomy" id="3702"/>
    <lineage>
        <taxon>Eukaryota</taxon>
        <taxon>Viridiplantae</taxon>
        <taxon>Streptophyta</taxon>
        <taxon>Embryophyta</taxon>
        <taxon>Tracheophyta</taxon>
        <taxon>Spermatophyta</taxon>
        <taxon>Magnoliopsida</taxon>
        <taxon>eudicotyledons</taxon>
        <taxon>Gunneridae</taxon>
        <taxon>Pentapetalae</taxon>
        <taxon>rosids</taxon>
        <taxon>malvids</taxon>
        <taxon>Brassicales</taxon>
        <taxon>Brassicaceae</taxon>
        <taxon>Camelineae</taxon>
        <taxon>Arabidopsis</taxon>
    </lineage>
</organism>
<dbReference type="EMBL" id="AF026473">
    <property type="protein sequence ID" value="AAB82713.1"/>
    <property type="molecule type" value="Genomic_DNA"/>
</dbReference>
<dbReference type="EMBL" id="AB016873">
    <property type="protein sequence ID" value="BAB10353.1"/>
    <property type="molecule type" value="Genomic_DNA"/>
</dbReference>
<dbReference type="EMBL" id="CP002688">
    <property type="protein sequence ID" value="AED94229.1"/>
    <property type="molecule type" value="Genomic_DNA"/>
</dbReference>
<dbReference type="EMBL" id="CP002688">
    <property type="protein sequence ID" value="ANM71016.1"/>
    <property type="molecule type" value="Genomic_DNA"/>
</dbReference>
<dbReference type="EMBL" id="BT025709">
    <property type="protein sequence ID" value="ABF82612.1"/>
    <property type="molecule type" value="mRNA"/>
</dbReference>
<dbReference type="EMBL" id="AK227202">
    <property type="protein sequence ID" value="BAE99241.1"/>
    <property type="molecule type" value="mRNA"/>
</dbReference>
<dbReference type="EMBL" id="AY086500">
    <property type="protein sequence ID" value="AAM63501.1"/>
    <property type="molecule type" value="mRNA"/>
</dbReference>
<dbReference type="PIR" id="C34669">
    <property type="entry name" value="C34669"/>
</dbReference>
<dbReference type="RefSeq" id="NP_001318691.1">
    <property type="nucleotide sequence ID" value="NM_001344218.1"/>
</dbReference>
<dbReference type="RefSeq" id="NP_198593.1">
    <property type="nucleotide sequence ID" value="NM_123136.3"/>
</dbReference>
<dbReference type="SMR" id="P25070"/>
<dbReference type="BioGRID" id="19006">
    <property type="interactions" value="1"/>
</dbReference>
<dbReference type="FunCoup" id="P25070">
    <property type="interactions" value="205"/>
</dbReference>
<dbReference type="STRING" id="3702.P25070"/>
<dbReference type="iPTMnet" id="P25070"/>
<dbReference type="PaxDb" id="3702-AT5G37770.1"/>
<dbReference type="ProteomicsDB" id="240998"/>
<dbReference type="EnsemblPlants" id="AT5G37770.1">
    <property type="protein sequence ID" value="AT5G37770.1"/>
    <property type="gene ID" value="AT5G37770"/>
</dbReference>
<dbReference type="EnsemblPlants" id="AT5G37770.2">
    <property type="protein sequence ID" value="AT5G37770.2"/>
    <property type="gene ID" value="AT5G37770"/>
</dbReference>
<dbReference type="GeneID" id="833755"/>
<dbReference type="Gramene" id="AT5G37770.1">
    <property type="protein sequence ID" value="AT5G37770.1"/>
    <property type="gene ID" value="AT5G37770"/>
</dbReference>
<dbReference type="Gramene" id="AT5G37770.2">
    <property type="protein sequence ID" value="AT5G37770.2"/>
    <property type="gene ID" value="AT5G37770"/>
</dbReference>
<dbReference type="KEGG" id="ath:AT5G37770"/>
<dbReference type="Araport" id="AT5G37770"/>
<dbReference type="TAIR" id="AT5G37770">
    <property type="gene designation" value="TCH2"/>
</dbReference>
<dbReference type="eggNOG" id="KOG0027">
    <property type="taxonomic scope" value="Eukaryota"/>
</dbReference>
<dbReference type="HOGENOM" id="CLU_061288_20_7_1"/>
<dbReference type="InParanoid" id="P25070"/>
<dbReference type="OMA" id="CSVHDCS"/>
<dbReference type="OrthoDB" id="26525at2759"/>
<dbReference type="PhylomeDB" id="P25070"/>
<dbReference type="PRO" id="PR:P25070"/>
<dbReference type="Proteomes" id="UP000006548">
    <property type="component" value="Chromosome 5"/>
</dbReference>
<dbReference type="ExpressionAtlas" id="P25070">
    <property type="expression patterns" value="baseline and differential"/>
</dbReference>
<dbReference type="GO" id="GO:0005509">
    <property type="term" value="F:calcium ion binding"/>
    <property type="evidence" value="ECO:0000314"/>
    <property type="project" value="TAIR"/>
</dbReference>
<dbReference type="GO" id="GO:0045087">
    <property type="term" value="P:innate immune response"/>
    <property type="evidence" value="ECO:0000315"/>
    <property type="project" value="TAIR"/>
</dbReference>
<dbReference type="GO" id="GO:0048574">
    <property type="term" value="P:long-day photoperiodism, flowering"/>
    <property type="evidence" value="ECO:0000315"/>
    <property type="project" value="TAIR"/>
</dbReference>
<dbReference type="GO" id="GO:0009909">
    <property type="term" value="P:regulation of flower development"/>
    <property type="evidence" value="ECO:0000316"/>
    <property type="project" value="TAIR"/>
</dbReference>
<dbReference type="GO" id="GO:0080164">
    <property type="term" value="P:regulation of nitric oxide metabolic process"/>
    <property type="evidence" value="ECO:0000316"/>
    <property type="project" value="TAIR"/>
</dbReference>
<dbReference type="GO" id="GO:0009737">
    <property type="term" value="P:response to abscisic acid"/>
    <property type="evidence" value="ECO:0000315"/>
    <property type="project" value="TAIR"/>
</dbReference>
<dbReference type="GO" id="GO:0009646">
    <property type="term" value="P:response to absence of light"/>
    <property type="evidence" value="ECO:0000270"/>
    <property type="project" value="TAIR"/>
</dbReference>
<dbReference type="GO" id="GO:0009733">
    <property type="term" value="P:response to auxin"/>
    <property type="evidence" value="ECO:0000270"/>
    <property type="project" value="TAIR"/>
</dbReference>
<dbReference type="GO" id="GO:0051592">
    <property type="term" value="P:response to calcium ion"/>
    <property type="evidence" value="ECO:0000270"/>
    <property type="project" value="TAIR"/>
</dbReference>
<dbReference type="GO" id="GO:0009409">
    <property type="term" value="P:response to cold"/>
    <property type="evidence" value="ECO:0000270"/>
    <property type="project" value="TAIR"/>
</dbReference>
<dbReference type="GO" id="GO:0009408">
    <property type="term" value="P:response to heat"/>
    <property type="evidence" value="ECO:0000270"/>
    <property type="project" value="TAIR"/>
</dbReference>
<dbReference type="GO" id="GO:0042542">
    <property type="term" value="P:response to hydrogen peroxide"/>
    <property type="evidence" value="ECO:0000270"/>
    <property type="project" value="TAIR"/>
</dbReference>
<dbReference type="GO" id="GO:0009612">
    <property type="term" value="P:response to mechanical stimulus"/>
    <property type="evidence" value="ECO:0000270"/>
    <property type="project" value="TAIR"/>
</dbReference>
<dbReference type="GO" id="GO:0010038">
    <property type="term" value="P:response to metal ion"/>
    <property type="evidence" value="ECO:0000315"/>
    <property type="project" value="TAIR"/>
</dbReference>
<dbReference type="FunFam" id="1.10.238.10:FF:000602">
    <property type="entry name" value="Calcium-binding protein CML24"/>
    <property type="match status" value="1"/>
</dbReference>
<dbReference type="FunFam" id="1.10.238.10:FF:000203">
    <property type="entry name" value="Probable calcium-binding protein CML27"/>
    <property type="match status" value="1"/>
</dbReference>
<dbReference type="Gene3D" id="1.10.238.10">
    <property type="entry name" value="EF-hand"/>
    <property type="match status" value="2"/>
</dbReference>
<dbReference type="InterPro" id="IPR011992">
    <property type="entry name" value="EF-hand-dom_pair"/>
</dbReference>
<dbReference type="InterPro" id="IPR018247">
    <property type="entry name" value="EF_Hand_1_Ca_BS"/>
</dbReference>
<dbReference type="InterPro" id="IPR002048">
    <property type="entry name" value="EF_hand_dom"/>
</dbReference>
<dbReference type="InterPro" id="IPR039647">
    <property type="entry name" value="EF_hand_pair_protein_CML-like"/>
</dbReference>
<dbReference type="PANTHER" id="PTHR10891">
    <property type="entry name" value="EF-HAND CALCIUM-BINDING DOMAIN CONTAINING PROTEIN"/>
    <property type="match status" value="1"/>
</dbReference>
<dbReference type="Pfam" id="PF13499">
    <property type="entry name" value="EF-hand_7"/>
    <property type="match status" value="2"/>
</dbReference>
<dbReference type="SMART" id="SM00054">
    <property type="entry name" value="EFh"/>
    <property type="match status" value="4"/>
</dbReference>
<dbReference type="SUPFAM" id="SSF47473">
    <property type="entry name" value="EF-hand"/>
    <property type="match status" value="1"/>
</dbReference>
<dbReference type="PROSITE" id="PS00018">
    <property type="entry name" value="EF_HAND_1"/>
    <property type="match status" value="4"/>
</dbReference>
<dbReference type="PROSITE" id="PS50222">
    <property type="entry name" value="EF_HAND_2"/>
    <property type="match status" value="4"/>
</dbReference>
<protein>
    <recommendedName>
        <fullName>Calcium-binding protein CML24</fullName>
    </recommendedName>
    <alternativeName>
        <fullName>Calmodulin-like protein 24</fullName>
    </alternativeName>
    <alternativeName>
        <fullName>Touch-induced calmodulin-related protein 2</fullName>
    </alternativeName>
</protein>